<reference key="1">
    <citation type="journal article" date="2000" name="Nature">
        <title>DNA sequence of both chromosomes of the cholera pathogen Vibrio cholerae.</title>
        <authorList>
            <person name="Heidelberg J.F."/>
            <person name="Eisen J.A."/>
            <person name="Nelson W.C."/>
            <person name="Clayton R.A."/>
            <person name="Gwinn M.L."/>
            <person name="Dodson R.J."/>
            <person name="Haft D.H."/>
            <person name="Hickey E.K."/>
            <person name="Peterson J.D."/>
            <person name="Umayam L.A."/>
            <person name="Gill S.R."/>
            <person name="Nelson K.E."/>
            <person name="Read T.D."/>
            <person name="Tettelin H."/>
            <person name="Richardson D.L."/>
            <person name="Ermolaeva M.D."/>
            <person name="Vamathevan J.J."/>
            <person name="Bass S."/>
            <person name="Qin H."/>
            <person name="Dragoi I."/>
            <person name="Sellers P."/>
            <person name="McDonald L.A."/>
            <person name="Utterback T.R."/>
            <person name="Fleischmann R.D."/>
            <person name="Nierman W.C."/>
            <person name="White O."/>
            <person name="Salzberg S.L."/>
            <person name="Smith H.O."/>
            <person name="Colwell R.R."/>
            <person name="Mekalanos J.J."/>
            <person name="Venter J.C."/>
            <person name="Fraser C.M."/>
        </authorList>
    </citation>
    <scope>NUCLEOTIDE SEQUENCE [LARGE SCALE GENOMIC DNA]</scope>
    <source>
        <strain>ATCC 39315 / El Tor Inaba N16961</strain>
    </source>
</reference>
<gene>
    <name evidence="1" type="primary">mobA</name>
    <name type="ordered locus">VC_1526</name>
</gene>
<name>MOBA_VIBCH</name>
<dbReference type="EC" id="2.7.7.77" evidence="1"/>
<dbReference type="EMBL" id="AE003852">
    <property type="protein sequence ID" value="AAF94680.1"/>
    <property type="molecule type" value="Genomic_DNA"/>
</dbReference>
<dbReference type="PIR" id="D82188">
    <property type="entry name" value="D82188"/>
</dbReference>
<dbReference type="RefSeq" id="NP_231166.1">
    <property type="nucleotide sequence ID" value="NC_002505.1"/>
</dbReference>
<dbReference type="RefSeq" id="WP_000633519.1">
    <property type="nucleotide sequence ID" value="NZ_LT906614.1"/>
</dbReference>
<dbReference type="SMR" id="Q9KRV8"/>
<dbReference type="STRING" id="243277.VC_1526"/>
<dbReference type="DNASU" id="2613905"/>
<dbReference type="EnsemblBacteria" id="AAF94680">
    <property type="protein sequence ID" value="AAF94680"/>
    <property type="gene ID" value="VC_1526"/>
</dbReference>
<dbReference type="KEGG" id="vch:VC_1526"/>
<dbReference type="PATRIC" id="fig|243277.26.peg.1454"/>
<dbReference type="eggNOG" id="COG0746">
    <property type="taxonomic scope" value="Bacteria"/>
</dbReference>
<dbReference type="HOGENOM" id="CLU_055597_5_1_6"/>
<dbReference type="Proteomes" id="UP000000584">
    <property type="component" value="Chromosome 1"/>
</dbReference>
<dbReference type="GO" id="GO:0005737">
    <property type="term" value="C:cytoplasm"/>
    <property type="evidence" value="ECO:0007669"/>
    <property type="project" value="UniProtKB-SubCell"/>
</dbReference>
<dbReference type="GO" id="GO:0005525">
    <property type="term" value="F:GTP binding"/>
    <property type="evidence" value="ECO:0007669"/>
    <property type="project" value="UniProtKB-UniRule"/>
</dbReference>
<dbReference type="GO" id="GO:0046872">
    <property type="term" value="F:metal ion binding"/>
    <property type="evidence" value="ECO:0007669"/>
    <property type="project" value="UniProtKB-KW"/>
</dbReference>
<dbReference type="GO" id="GO:0061603">
    <property type="term" value="F:molybdenum cofactor guanylyltransferase activity"/>
    <property type="evidence" value="ECO:0007669"/>
    <property type="project" value="UniProtKB-EC"/>
</dbReference>
<dbReference type="GO" id="GO:0016779">
    <property type="term" value="F:nucleotidyltransferase activity"/>
    <property type="evidence" value="ECO:0000318"/>
    <property type="project" value="GO_Central"/>
</dbReference>
<dbReference type="GO" id="GO:1902758">
    <property type="term" value="P:bis(molybdopterin guanine dinucleotide)molybdenum biosynthetic process"/>
    <property type="evidence" value="ECO:0000318"/>
    <property type="project" value="GO_Central"/>
</dbReference>
<dbReference type="CDD" id="cd02503">
    <property type="entry name" value="MobA"/>
    <property type="match status" value="1"/>
</dbReference>
<dbReference type="Gene3D" id="3.90.550.10">
    <property type="entry name" value="Spore Coat Polysaccharide Biosynthesis Protein SpsA, Chain A"/>
    <property type="match status" value="1"/>
</dbReference>
<dbReference type="HAMAP" id="MF_00316">
    <property type="entry name" value="MobA"/>
    <property type="match status" value="1"/>
</dbReference>
<dbReference type="InterPro" id="IPR025877">
    <property type="entry name" value="MobA-like_NTP_Trfase"/>
</dbReference>
<dbReference type="InterPro" id="IPR013482">
    <property type="entry name" value="Molybde_CF_guanTrfase"/>
</dbReference>
<dbReference type="InterPro" id="IPR029044">
    <property type="entry name" value="Nucleotide-diphossugar_trans"/>
</dbReference>
<dbReference type="NCBIfam" id="TIGR02665">
    <property type="entry name" value="molyb_mobA"/>
    <property type="match status" value="1"/>
</dbReference>
<dbReference type="PANTHER" id="PTHR19136">
    <property type="entry name" value="MOLYBDENUM COFACTOR GUANYLYLTRANSFERASE"/>
    <property type="match status" value="1"/>
</dbReference>
<dbReference type="PANTHER" id="PTHR19136:SF81">
    <property type="entry name" value="MOLYBDENUM COFACTOR GUANYLYLTRANSFERASE"/>
    <property type="match status" value="1"/>
</dbReference>
<dbReference type="Pfam" id="PF12804">
    <property type="entry name" value="NTP_transf_3"/>
    <property type="match status" value="1"/>
</dbReference>
<dbReference type="SUPFAM" id="SSF53448">
    <property type="entry name" value="Nucleotide-diphospho-sugar transferases"/>
    <property type="match status" value="1"/>
</dbReference>
<protein>
    <recommendedName>
        <fullName evidence="1">Molybdenum cofactor guanylyltransferase</fullName>
        <shortName evidence="1">MoCo guanylyltransferase</shortName>
        <ecNumber evidence="1">2.7.7.77</ecNumber>
    </recommendedName>
    <alternativeName>
        <fullName evidence="1">GTP:molybdopterin guanylyltransferase</fullName>
    </alternativeName>
    <alternativeName>
        <fullName evidence="1">Mo-MPT guanylyltransferase</fullName>
    </alternativeName>
    <alternativeName>
        <fullName evidence="1">Molybdopterin guanylyltransferase</fullName>
    </alternativeName>
    <alternativeName>
        <fullName evidence="1">Molybdopterin-guanine dinucleotide synthase</fullName>
        <shortName evidence="1">MGD synthase</shortName>
    </alternativeName>
</protein>
<evidence type="ECO:0000255" key="1">
    <source>
        <dbReference type="HAMAP-Rule" id="MF_00316"/>
    </source>
</evidence>
<feature type="chain" id="PRO_0000134921" description="Molybdenum cofactor guanylyltransferase">
    <location>
        <begin position="1"/>
        <end position="203"/>
    </location>
</feature>
<feature type="binding site" evidence="1">
    <location>
        <begin position="20"/>
        <end position="22"/>
    </location>
    <ligand>
        <name>GTP</name>
        <dbReference type="ChEBI" id="CHEBI:37565"/>
    </ligand>
</feature>
<feature type="binding site" evidence="1">
    <location>
        <position position="33"/>
    </location>
    <ligand>
        <name>GTP</name>
        <dbReference type="ChEBI" id="CHEBI:37565"/>
    </ligand>
</feature>
<feature type="binding site" evidence="1">
    <location>
        <position position="61"/>
    </location>
    <ligand>
        <name>GTP</name>
        <dbReference type="ChEBI" id="CHEBI:37565"/>
    </ligand>
</feature>
<feature type="binding site" evidence="1">
    <location>
        <position position="78"/>
    </location>
    <ligand>
        <name>GTP</name>
        <dbReference type="ChEBI" id="CHEBI:37565"/>
    </ligand>
</feature>
<feature type="binding site" evidence="1">
    <location>
        <position position="108"/>
    </location>
    <ligand>
        <name>GTP</name>
        <dbReference type="ChEBI" id="CHEBI:37565"/>
    </ligand>
</feature>
<feature type="binding site" evidence="1">
    <location>
        <position position="108"/>
    </location>
    <ligand>
        <name>Mg(2+)</name>
        <dbReference type="ChEBI" id="CHEBI:18420"/>
    </ligand>
</feature>
<keyword id="KW-0963">Cytoplasm</keyword>
<keyword id="KW-0342">GTP-binding</keyword>
<keyword id="KW-0460">Magnesium</keyword>
<keyword id="KW-0479">Metal-binding</keyword>
<keyword id="KW-0501">Molybdenum cofactor biosynthesis</keyword>
<keyword id="KW-0547">Nucleotide-binding</keyword>
<keyword id="KW-1185">Reference proteome</keyword>
<keyword id="KW-0808">Transferase</keyword>
<accession>Q9KRV8</accession>
<proteinExistence type="inferred from homology"/>
<organism>
    <name type="scientific">Vibrio cholerae serotype O1 (strain ATCC 39315 / El Tor Inaba N16961)</name>
    <dbReference type="NCBI Taxonomy" id="243277"/>
    <lineage>
        <taxon>Bacteria</taxon>
        <taxon>Pseudomonadati</taxon>
        <taxon>Pseudomonadota</taxon>
        <taxon>Gammaproteobacteria</taxon>
        <taxon>Vibrionales</taxon>
        <taxon>Vibrionaceae</taxon>
        <taxon>Vibrio</taxon>
    </lineage>
</organism>
<comment type="function">
    <text evidence="1">Transfers a GMP moiety from GTP to Mo-molybdopterin (Mo-MPT) cofactor (Moco or molybdenum cofactor) to form Mo-molybdopterin guanine dinucleotide (Mo-MGD) cofactor.</text>
</comment>
<comment type="catalytic activity">
    <reaction evidence="1">
        <text>Mo-molybdopterin + GTP + H(+) = Mo-molybdopterin guanine dinucleotide + diphosphate</text>
        <dbReference type="Rhea" id="RHEA:34243"/>
        <dbReference type="ChEBI" id="CHEBI:15378"/>
        <dbReference type="ChEBI" id="CHEBI:33019"/>
        <dbReference type="ChEBI" id="CHEBI:37565"/>
        <dbReference type="ChEBI" id="CHEBI:71302"/>
        <dbReference type="ChEBI" id="CHEBI:71310"/>
        <dbReference type="EC" id="2.7.7.77"/>
    </reaction>
</comment>
<comment type="cofactor">
    <cofactor evidence="1">
        <name>Mg(2+)</name>
        <dbReference type="ChEBI" id="CHEBI:18420"/>
    </cofactor>
</comment>
<comment type="subunit">
    <text evidence="1">Monomer.</text>
</comment>
<comment type="subcellular location">
    <subcellularLocation>
        <location evidence="1">Cytoplasm</location>
    </subcellularLocation>
</comment>
<comment type="domain">
    <text evidence="1">The N-terminal domain determines nucleotide recognition and specific binding, while the C-terminal domain determines the specific binding to the target protein.</text>
</comment>
<comment type="similarity">
    <text evidence="1">Belongs to the MobA family.</text>
</comment>
<sequence>MITTQTLPTLQPSDTSWVILAGGQASRMGGQDKGLIQLNGQPLVQHVIDKLAPQTPTLLINANRNQSQYQQFAPVISDEFPDYPGPLGGIHAGLSHAPTDWVGFVPCDSPLICDDLVARFCQAVKPESDILVAHDGEHQQPVFTLFHKRVLPKLSAFLARGDRKIILLYDECHTSYVDFSDAPSCFFNLNTPQELAQFGALHP</sequence>